<name>RGS4_CHICK</name>
<gene>
    <name type="primary">RGS4</name>
</gene>
<feature type="chain" id="PRO_0000280761" description="Regulator of G-protein signaling 4">
    <location>
        <begin position="1"/>
        <end position="208"/>
    </location>
</feature>
<feature type="domain" description="RGS" evidence="2">
    <location>
        <begin position="62"/>
        <end position="178"/>
    </location>
</feature>
<feature type="lipid moiety-binding region" description="S-palmitoyl cysteine" evidence="1">
    <location>
        <position position="2"/>
    </location>
</feature>
<feature type="lipid moiety-binding region" description="S-palmitoyl cysteine" evidence="1">
    <location>
        <position position="12"/>
    </location>
</feature>
<feature type="lipid moiety-binding region" description="S-palmitoyl cysteine" evidence="1">
    <location>
        <position position="95"/>
    </location>
</feature>
<accession>Q7SZC6</accession>
<proteinExistence type="evidence at transcript level"/>
<comment type="function">
    <text evidence="1">Inhibits signal transduction by increasing the GTPase activity of G protein alpha subunits thereby driving them into their inactive GDP-bound form. Activity on G(z)-alpha is inhibited by phosphorylation of the G-protein. Activity on G(z)-alpha and G(i)-alpha-1 is inhibited by palmitoylation of the G-protein (By similarity).</text>
</comment>
<comment type="tissue specificity">
    <text evidence="3">Expressed in the developing nervous system.</text>
</comment>
<comment type="PTM">
    <text evidence="1">Palmitoylated on Cys-2 and/or Cys-12.</text>
</comment>
<comment type="PTM">
    <text evidence="1">Phosphorylated by cyclic GMP-dependent protein kinase.</text>
</comment>
<reference key="1">
    <citation type="journal article" date="2003" name="J. Neurosci.">
        <title>Dynamic expression of RGS4 in the developing nervous system and regulation by the neural type-specific transcription factor Phox2b.</title>
        <authorList>
            <person name="Grillet N."/>
            <person name="Dubreuil V."/>
            <person name="Dufour H.D."/>
            <person name="Brunet J.-F."/>
        </authorList>
    </citation>
    <scope>NUCLEOTIDE SEQUENCE [MRNA]</scope>
    <scope>TISSUE SPECIFICITY</scope>
    <source>
        <tissue>Hindbrain</tissue>
    </source>
</reference>
<keyword id="KW-0449">Lipoprotein</keyword>
<keyword id="KW-0564">Palmitate</keyword>
<keyword id="KW-0597">Phosphoprotein</keyword>
<keyword id="KW-1185">Reference proteome</keyword>
<keyword id="KW-0734">Signal transduction inhibitor</keyword>
<evidence type="ECO:0000250" key="1"/>
<evidence type="ECO:0000255" key="2">
    <source>
        <dbReference type="PROSITE-ProRule" id="PRU00171"/>
    </source>
</evidence>
<evidence type="ECO:0000269" key="3">
    <source>
    </source>
</evidence>
<organism>
    <name type="scientific">Gallus gallus</name>
    <name type="common">Chicken</name>
    <dbReference type="NCBI Taxonomy" id="9031"/>
    <lineage>
        <taxon>Eukaryota</taxon>
        <taxon>Metazoa</taxon>
        <taxon>Chordata</taxon>
        <taxon>Craniata</taxon>
        <taxon>Vertebrata</taxon>
        <taxon>Euteleostomi</taxon>
        <taxon>Archelosauria</taxon>
        <taxon>Archosauria</taxon>
        <taxon>Dinosauria</taxon>
        <taxon>Saurischia</taxon>
        <taxon>Theropoda</taxon>
        <taxon>Coelurosauria</taxon>
        <taxon>Aves</taxon>
        <taxon>Neognathae</taxon>
        <taxon>Galloanserae</taxon>
        <taxon>Galliformes</taxon>
        <taxon>Phasianidae</taxon>
        <taxon>Phasianinae</taxon>
        <taxon>Gallus</taxon>
    </lineage>
</organism>
<dbReference type="EMBL" id="AY297457">
    <property type="protein sequence ID" value="AAP57222.1"/>
    <property type="molecule type" value="mRNA"/>
</dbReference>
<dbReference type="RefSeq" id="NP_989716.1">
    <property type="nucleotide sequence ID" value="NM_204385.1"/>
</dbReference>
<dbReference type="SMR" id="Q7SZC6"/>
<dbReference type="FunCoup" id="Q7SZC6">
    <property type="interactions" value="82"/>
</dbReference>
<dbReference type="STRING" id="9031.ENSGALP00000004041"/>
<dbReference type="PaxDb" id="9031-ENSGALP00000004041"/>
<dbReference type="GeneID" id="378901"/>
<dbReference type="KEGG" id="gga:378901"/>
<dbReference type="CTD" id="5999"/>
<dbReference type="VEuPathDB" id="HostDB:geneid_378901"/>
<dbReference type="eggNOG" id="KOG3589">
    <property type="taxonomic scope" value="Eukaryota"/>
</dbReference>
<dbReference type="InParanoid" id="Q7SZC6"/>
<dbReference type="OrthoDB" id="196547at2759"/>
<dbReference type="PhylomeDB" id="Q7SZC6"/>
<dbReference type="PRO" id="PR:Q7SZC6"/>
<dbReference type="Proteomes" id="UP000000539">
    <property type="component" value="Unassembled WGS sequence"/>
</dbReference>
<dbReference type="GO" id="GO:0009968">
    <property type="term" value="P:negative regulation of signal transduction"/>
    <property type="evidence" value="ECO:0007669"/>
    <property type="project" value="UniProtKB-KW"/>
</dbReference>
<dbReference type="CDD" id="cd08714">
    <property type="entry name" value="RGS_RGS4"/>
    <property type="match status" value="1"/>
</dbReference>
<dbReference type="FunFam" id="1.10.167.10:FF:000001">
    <property type="entry name" value="Putative regulator of g-protein signaling 12"/>
    <property type="match status" value="1"/>
</dbReference>
<dbReference type="Gene3D" id="1.10.167.10">
    <property type="entry name" value="Regulator of G-protein Signalling 4, domain 2"/>
    <property type="match status" value="1"/>
</dbReference>
<dbReference type="InterPro" id="IPR016137">
    <property type="entry name" value="RGS"/>
</dbReference>
<dbReference type="InterPro" id="IPR034953">
    <property type="entry name" value="RGS_RGS4"/>
</dbReference>
<dbReference type="InterPro" id="IPR036305">
    <property type="entry name" value="RGS_sf"/>
</dbReference>
<dbReference type="InterPro" id="IPR044926">
    <property type="entry name" value="RGS_subdomain_2"/>
</dbReference>
<dbReference type="PANTHER" id="PTHR10845">
    <property type="entry name" value="REGULATOR OF G PROTEIN SIGNALING"/>
    <property type="match status" value="1"/>
</dbReference>
<dbReference type="PANTHER" id="PTHR10845:SF184">
    <property type="entry name" value="REGULATOR OF G-PROTEIN SIGNALING 4"/>
    <property type="match status" value="1"/>
</dbReference>
<dbReference type="Pfam" id="PF00615">
    <property type="entry name" value="RGS"/>
    <property type="match status" value="1"/>
</dbReference>
<dbReference type="PRINTS" id="PR01301">
    <property type="entry name" value="RGSPROTEIN"/>
</dbReference>
<dbReference type="SMART" id="SM00315">
    <property type="entry name" value="RGS"/>
    <property type="match status" value="1"/>
</dbReference>
<dbReference type="SUPFAM" id="SSF48097">
    <property type="entry name" value="Regulator of G-protein signaling, RGS"/>
    <property type="match status" value="1"/>
</dbReference>
<dbReference type="PROSITE" id="PS50132">
    <property type="entry name" value="RGS"/>
    <property type="match status" value="1"/>
</dbReference>
<protein>
    <recommendedName>
        <fullName>Regulator of G-protein signaling 4</fullName>
        <shortName>RGS4</shortName>
    </recommendedName>
</protein>
<sequence length="208" mass="23523">MCKGLAALPATCLKSAKDMKHRLGVLLQKSDSCDYGSSQGKKEKVSSSQRVSQEEVKKWAESLENLIHHDRGLAAFRAFLKSEYSEENIEFWVSCEDYKKTKSPAKLSTKARKIYDEFISVQATKEVNLDSCTREKTSHNMLEPTLSCFDEAQRKIFTLMEKDSYRRFLKSPYLDLVSPPRAGCGPENCKRAHAHALDCNSNIISQCA</sequence>